<comment type="function">
    <text evidence="1">Part of the high-affinity ATP-driven potassium transport (or Kdp) system, which catalyzes the hydrolysis of ATP coupled with the electrogenic transport of potassium into the cytoplasm. This subunit binds the periplasmic potassium ions and delivers the ions to the membrane domain of KdpB through an intramembrane tunnel.</text>
</comment>
<comment type="subunit">
    <text evidence="1">The system is composed of three essential subunits: KdpA, KdpB and KdpC.</text>
</comment>
<comment type="subcellular location">
    <subcellularLocation>
        <location evidence="1">Cell inner membrane</location>
        <topology evidence="1">Multi-pass membrane protein</topology>
    </subcellularLocation>
</comment>
<comment type="similarity">
    <text evidence="1">Belongs to the KdpA family.</text>
</comment>
<proteinExistence type="inferred from homology"/>
<protein>
    <recommendedName>
        <fullName evidence="1">Potassium-transporting ATPase potassium-binding subunit</fullName>
    </recommendedName>
    <alternativeName>
        <fullName evidence="1">ATP phosphohydrolase [potassium-transporting] A chain</fullName>
    </alternativeName>
    <alternativeName>
        <fullName evidence="1">Potassium-binding and translocating subunit A</fullName>
    </alternativeName>
    <alternativeName>
        <fullName evidence="1">Potassium-translocating ATPase A chain</fullName>
    </alternativeName>
</protein>
<gene>
    <name evidence="1" type="primary">kdpA</name>
    <name type="ordered locus">Mnod_0193</name>
</gene>
<accession>B8I9I5</accession>
<feature type="chain" id="PRO_1000190742" description="Potassium-transporting ATPase potassium-binding subunit">
    <location>
        <begin position="1"/>
        <end position="571"/>
    </location>
</feature>
<feature type="transmembrane region" description="Helical" evidence="1">
    <location>
        <begin position="5"/>
        <end position="25"/>
    </location>
</feature>
<feature type="transmembrane region" description="Helical" evidence="1">
    <location>
        <begin position="64"/>
        <end position="84"/>
    </location>
</feature>
<feature type="transmembrane region" description="Helical" evidence="1">
    <location>
        <begin position="136"/>
        <end position="156"/>
    </location>
</feature>
<feature type="transmembrane region" description="Helical" evidence="1">
    <location>
        <begin position="178"/>
        <end position="198"/>
    </location>
</feature>
<feature type="transmembrane region" description="Helical" evidence="1">
    <location>
        <begin position="254"/>
        <end position="274"/>
    </location>
</feature>
<feature type="transmembrane region" description="Helical" evidence="1">
    <location>
        <begin position="285"/>
        <end position="305"/>
    </location>
</feature>
<feature type="transmembrane region" description="Helical" evidence="1">
    <location>
        <begin position="330"/>
        <end position="350"/>
    </location>
</feature>
<feature type="transmembrane region" description="Helical" evidence="1">
    <location>
        <begin position="357"/>
        <end position="379"/>
    </location>
</feature>
<feature type="transmembrane region" description="Helical" evidence="1">
    <location>
        <begin position="421"/>
        <end position="441"/>
    </location>
</feature>
<feature type="transmembrane region" description="Helical" evidence="1">
    <location>
        <begin position="488"/>
        <end position="508"/>
    </location>
</feature>
<feature type="transmembrane region" description="Helical" evidence="1">
    <location>
        <begin position="527"/>
        <end position="547"/>
    </location>
</feature>
<dbReference type="EMBL" id="CP001349">
    <property type="protein sequence ID" value="ACL55238.1"/>
    <property type="molecule type" value="Genomic_DNA"/>
</dbReference>
<dbReference type="RefSeq" id="WP_015926951.1">
    <property type="nucleotide sequence ID" value="NC_011894.1"/>
</dbReference>
<dbReference type="SMR" id="B8I9I5"/>
<dbReference type="STRING" id="460265.Mnod_0193"/>
<dbReference type="KEGG" id="mno:Mnod_0193"/>
<dbReference type="eggNOG" id="COG2060">
    <property type="taxonomic scope" value="Bacteria"/>
</dbReference>
<dbReference type="HOGENOM" id="CLU_018614_3_0_5"/>
<dbReference type="OrthoDB" id="9763796at2"/>
<dbReference type="Proteomes" id="UP000008207">
    <property type="component" value="Chromosome"/>
</dbReference>
<dbReference type="GO" id="GO:0005886">
    <property type="term" value="C:plasma membrane"/>
    <property type="evidence" value="ECO:0007669"/>
    <property type="project" value="UniProtKB-SubCell"/>
</dbReference>
<dbReference type="GO" id="GO:0008556">
    <property type="term" value="F:P-type potassium transmembrane transporter activity"/>
    <property type="evidence" value="ECO:0007669"/>
    <property type="project" value="InterPro"/>
</dbReference>
<dbReference type="GO" id="GO:0030955">
    <property type="term" value="F:potassium ion binding"/>
    <property type="evidence" value="ECO:0007669"/>
    <property type="project" value="UniProtKB-UniRule"/>
</dbReference>
<dbReference type="HAMAP" id="MF_00275">
    <property type="entry name" value="KdpA"/>
    <property type="match status" value="1"/>
</dbReference>
<dbReference type="InterPro" id="IPR004623">
    <property type="entry name" value="KdpA"/>
</dbReference>
<dbReference type="NCBIfam" id="TIGR00680">
    <property type="entry name" value="kdpA"/>
    <property type="match status" value="1"/>
</dbReference>
<dbReference type="PANTHER" id="PTHR30607">
    <property type="entry name" value="POTASSIUM-TRANSPORTING ATPASE A CHAIN"/>
    <property type="match status" value="1"/>
</dbReference>
<dbReference type="PANTHER" id="PTHR30607:SF2">
    <property type="entry name" value="POTASSIUM-TRANSPORTING ATPASE POTASSIUM-BINDING SUBUNIT"/>
    <property type="match status" value="1"/>
</dbReference>
<dbReference type="Pfam" id="PF03814">
    <property type="entry name" value="KdpA"/>
    <property type="match status" value="1"/>
</dbReference>
<dbReference type="PIRSF" id="PIRSF001294">
    <property type="entry name" value="K_ATPaseA"/>
    <property type="match status" value="1"/>
</dbReference>
<organism>
    <name type="scientific">Methylobacterium nodulans (strain LMG 21967 / CNCM I-2342 / ORS 2060)</name>
    <dbReference type="NCBI Taxonomy" id="460265"/>
    <lineage>
        <taxon>Bacteria</taxon>
        <taxon>Pseudomonadati</taxon>
        <taxon>Pseudomonadota</taxon>
        <taxon>Alphaproteobacteria</taxon>
        <taxon>Hyphomicrobiales</taxon>
        <taxon>Methylobacteriaceae</taxon>
        <taxon>Methylobacterium</taxon>
    </lineage>
</organism>
<name>KDPA_METNO</name>
<sequence>MTLNGWTQITLYGAVVLALVKPLGWYMTRVFTGERTLLSPVLAPIERGLYRAAGIDARQEQTWLGYAGALLLFHVFGFLVLYAILRLQAALPLNPADQAAVAPDLAFNTSASFITNTNWQNYGGESTLSYLSQMLGLTHQNFLSAATGIAVAVALIRGFARASTRTLGSFWVDLTRAILYVLLPICILYTLFLVWQGIPQTLGAYIDATTLEGGKQTIALGPVASQVAIKMLGTNGGGFFNANAAHPFENPTALSNFVQMVSIFAIGAALTNVFGRMVGDERQGWAILAAMGALFLAGVAVAYWAEANGSPVLASFGLSGGNLEGKEVRFDIAASALFAVVTTAASCGAVNAMHDSFTALGGMIPLVNMQLGEVIIGGVGAGLYGMLIFVVVAIFVAGLMVGRTPEYLGKKIETKEVKMAMLGILCLPLMMLGFTALATVLPTGLAGPANAGPHGFSEILYAYTSAAANNGSAFAGLSGNTPFYNATLAVGMLVGRFFVIIPALAIAGALAAKKTVPASAGTFPTDGALFVGLLVGVILIIGGLTFFPALALGPVVEHLAGAAGQTFAMGD</sequence>
<keyword id="KW-0997">Cell inner membrane</keyword>
<keyword id="KW-1003">Cell membrane</keyword>
<keyword id="KW-0406">Ion transport</keyword>
<keyword id="KW-0472">Membrane</keyword>
<keyword id="KW-0630">Potassium</keyword>
<keyword id="KW-0633">Potassium transport</keyword>
<keyword id="KW-1185">Reference proteome</keyword>
<keyword id="KW-0812">Transmembrane</keyword>
<keyword id="KW-1133">Transmembrane helix</keyword>
<keyword id="KW-0813">Transport</keyword>
<evidence type="ECO:0000255" key="1">
    <source>
        <dbReference type="HAMAP-Rule" id="MF_00275"/>
    </source>
</evidence>
<reference key="1">
    <citation type="submission" date="2009-01" db="EMBL/GenBank/DDBJ databases">
        <title>Complete sequence of chromosome of Methylobacterium nodulans ORS 2060.</title>
        <authorList>
            <consortium name="US DOE Joint Genome Institute"/>
            <person name="Lucas S."/>
            <person name="Copeland A."/>
            <person name="Lapidus A."/>
            <person name="Glavina del Rio T."/>
            <person name="Dalin E."/>
            <person name="Tice H."/>
            <person name="Bruce D."/>
            <person name="Goodwin L."/>
            <person name="Pitluck S."/>
            <person name="Sims D."/>
            <person name="Brettin T."/>
            <person name="Detter J.C."/>
            <person name="Han C."/>
            <person name="Larimer F."/>
            <person name="Land M."/>
            <person name="Hauser L."/>
            <person name="Kyrpides N."/>
            <person name="Ivanova N."/>
            <person name="Marx C.J."/>
            <person name="Richardson P."/>
        </authorList>
    </citation>
    <scope>NUCLEOTIDE SEQUENCE [LARGE SCALE GENOMIC DNA]</scope>
    <source>
        <strain>LMG 21967 / CNCM I-2342 / ORS 2060</strain>
    </source>
</reference>